<dbReference type="EC" id="2.7.1.1" evidence="1"/>
<dbReference type="EMBL" id="AC012561">
    <property type="protein sequence ID" value="AAF87885.1"/>
    <property type="molecule type" value="Genomic_DNA"/>
</dbReference>
<dbReference type="EMBL" id="CP002684">
    <property type="protein sequence ID" value="AEE32553.1"/>
    <property type="molecule type" value="Genomic_DNA"/>
</dbReference>
<dbReference type="EMBL" id="AY074314">
    <property type="protein sequence ID" value="AAL67011.1"/>
    <property type="molecule type" value="mRNA"/>
</dbReference>
<dbReference type="EMBL" id="AY096416">
    <property type="protein sequence ID" value="AAM20056.1"/>
    <property type="molecule type" value="mRNA"/>
</dbReference>
<dbReference type="PIR" id="A96541">
    <property type="entry name" value="A96541"/>
</dbReference>
<dbReference type="RefSeq" id="NP_175463.1">
    <property type="nucleotide sequence ID" value="NM_103929.4"/>
</dbReference>
<dbReference type="SMR" id="Q9LPS1"/>
<dbReference type="BioGRID" id="26693">
    <property type="interactions" value="5"/>
</dbReference>
<dbReference type="FunCoup" id="Q9LPS1">
    <property type="interactions" value="2974"/>
</dbReference>
<dbReference type="STRING" id="3702.Q9LPS1"/>
<dbReference type="iPTMnet" id="Q9LPS1"/>
<dbReference type="PaxDb" id="3702-AT1G50460.1"/>
<dbReference type="EnsemblPlants" id="AT1G50460.1">
    <property type="protein sequence ID" value="AT1G50460.1"/>
    <property type="gene ID" value="AT1G50460"/>
</dbReference>
<dbReference type="GeneID" id="841468"/>
<dbReference type="Gramene" id="AT1G50460.1">
    <property type="protein sequence ID" value="AT1G50460.1"/>
    <property type="gene ID" value="AT1G50460"/>
</dbReference>
<dbReference type="KEGG" id="ath:AT1G50460"/>
<dbReference type="Araport" id="AT1G50460"/>
<dbReference type="TAIR" id="AT1G50460">
    <property type="gene designation" value="HKL1"/>
</dbReference>
<dbReference type="eggNOG" id="KOG1369">
    <property type="taxonomic scope" value="Eukaryota"/>
</dbReference>
<dbReference type="HOGENOM" id="CLU_014393_5_1_1"/>
<dbReference type="InParanoid" id="Q9LPS1"/>
<dbReference type="OMA" id="ADCVQQF"/>
<dbReference type="OrthoDB" id="419537at2759"/>
<dbReference type="PhylomeDB" id="Q9LPS1"/>
<dbReference type="BioCyc" id="ARA:AT1G50460-MONOMER"/>
<dbReference type="UniPathway" id="UPA00109">
    <property type="reaction ID" value="UER00180"/>
</dbReference>
<dbReference type="UniPathway" id="UPA00242"/>
<dbReference type="PRO" id="PR:Q9LPS1"/>
<dbReference type="Proteomes" id="UP000006548">
    <property type="component" value="Chromosome 1"/>
</dbReference>
<dbReference type="ExpressionAtlas" id="Q9LPS1">
    <property type="expression patterns" value="baseline and differential"/>
</dbReference>
<dbReference type="GO" id="GO:0005741">
    <property type="term" value="C:mitochondrial outer membrane"/>
    <property type="evidence" value="ECO:0007669"/>
    <property type="project" value="UniProtKB-SubCell"/>
</dbReference>
<dbReference type="GO" id="GO:0005739">
    <property type="term" value="C:mitochondrion"/>
    <property type="evidence" value="ECO:0000314"/>
    <property type="project" value="TAIR"/>
</dbReference>
<dbReference type="GO" id="GO:0005524">
    <property type="term" value="F:ATP binding"/>
    <property type="evidence" value="ECO:0007669"/>
    <property type="project" value="UniProtKB-KW"/>
</dbReference>
<dbReference type="GO" id="GO:0005536">
    <property type="term" value="F:D-glucose binding"/>
    <property type="evidence" value="ECO:0007669"/>
    <property type="project" value="InterPro"/>
</dbReference>
<dbReference type="GO" id="GO:0004396">
    <property type="term" value="F:hexokinase activity"/>
    <property type="evidence" value="ECO:0007669"/>
    <property type="project" value="UniProtKB-EC"/>
</dbReference>
<dbReference type="GO" id="GO:0006096">
    <property type="term" value="P:glycolytic process"/>
    <property type="evidence" value="ECO:0007669"/>
    <property type="project" value="UniProtKB-UniPathway"/>
</dbReference>
<dbReference type="GO" id="GO:0019318">
    <property type="term" value="P:hexose metabolic process"/>
    <property type="evidence" value="ECO:0007669"/>
    <property type="project" value="UniProtKB-UniPathway"/>
</dbReference>
<dbReference type="GO" id="GO:0001678">
    <property type="term" value="P:intracellular glucose homeostasis"/>
    <property type="evidence" value="ECO:0007669"/>
    <property type="project" value="InterPro"/>
</dbReference>
<dbReference type="GO" id="GO:0009409">
    <property type="term" value="P:response to cold"/>
    <property type="evidence" value="ECO:0000270"/>
    <property type="project" value="TAIR"/>
</dbReference>
<dbReference type="GO" id="GO:0006970">
    <property type="term" value="P:response to osmotic stress"/>
    <property type="evidence" value="ECO:0000270"/>
    <property type="project" value="TAIR"/>
</dbReference>
<dbReference type="GO" id="GO:0009651">
    <property type="term" value="P:response to salt stress"/>
    <property type="evidence" value="ECO:0000270"/>
    <property type="project" value="TAIR"/>
</dbReference>
<dbReference type="GO" id="GO:0080147">
    <property type="term" value="P:root hair cell development"/>
    <property type="evidence" value="ECO:0000315"/>
    <property type="project" value="TAIR"/>
</dbReference>
<dbReference type="CDD" id="cd24020">
    <property type="entry name" value="ASKHA_NBD_HK_plant"/>
    <property type="match status" value="1"/>
</dbReference>
<dbReference type="FunFam" id="3.30.420.40:FF:000034">
    <property type="entry name" value="Phosphotransferase"/>
    <property type="match status" value="1"/>
</dbReference>
<dbReference type="FunFam" id="3.40.367.20:FF:000003">
    <property type="entry name" value="Phosphotransferase"/>
    <property type="match status" value="1"/>
</dbReference>
<dbReference type="Gene3D" id="3.30.420.40">
    <property type="match status" value="1"/>
</dbReference>
<dbReference type="Gene3D" id="3.40.367.20">
    <property type="match status" value="1"/>
</dbReference>
<dbReference type="InterPro" id="IPR043129">
    <property type="entry name" value="ATPase_NBD"/>
</dbReference>
<dbReference type="InterPro" id="IPR001312">
    <property type="entry name" value="Hexokinase"/>
</dbReference>
<dbReference type="InterPro" id="IPR022673">
    <property type="entry name" value="Hexokinase_C"/>
</dbReference>
<dbReference type="InterPro" id="IPR022672">
    <property type="entry name" value="Hexokinase_N"/>
</dbReference>
<dbReference type="PANTHER" id="PTHR19443">
    <property type="entry name" value="HEXOKINASE"/>
    <property type="match status" value="1"/>
</dbReference>
<dbReference type="PANTHER" id="PTHR19443:SF73">
    <property type="entry name" value="HEXOKINASE-3"/>
    <property type="match status" value="1"/>
</dbReference>
<dbReference type="Pfam" id="PF00349">
    <property type="entry name" value="Hexokinase_1"/>
    <property type="match status" value="1"/>
</dbReference>
<dbReference type="Pfam" id="PF03727">
    <property type="entry name" value="Hexokinase_2"/>
    <property type="match status" value="1"/>
</dbReference>
<dbReference type="PRINTS" id="PR00475">
    <property type="entry name" value="HEXOKINASE"/>
</dbReference>
<dbReference type="SUPFAM" id="SSF53067">
    <property type="entry name" value="Actin-like ATPase domain"/>
    <property type="match status" value="2"/>
</dbReference>
<dbReference type="PROSITE" id="PS51748">
    <property type="entry name" value="HEXOKINASE_2"/>
    <property type="match status" value="1"/>
</dbReference>
<protein>
    <recommendedName>
        <fullName>Hexokinase-3</fullName>
        <ecNumber evidence="1">2.7.1.1</ecNumber>
    </recommendedName>
    <alternativeName>
        <fullName>Hexokinase-like 1</fullName>
    </alternativeName>
</protein>
<evidence type="ECO:0000250" key="1">
    <source>
        <dbReference type="UniProtKB" id="P93834"/>
    </source>
</evidence>
<evidence type="ECO:0000250" key="2">
    <source>
        <dbReference type="UniProtKB" id="Q42525"/>
    </source>
</evidence>
<evidence type="ECO:0000250" key="3">
    <source>
        <dbReference type="UniProtKB" id="Q8LQ68"/>
    </source>
</evidence>
<evidence type="ECO:0000255" key="4"/>
<evidence type="ECO:0000255" key="5">
    <source>
        <dbReference type="PROSITE-ProRule" id="PRU01084"/>
    </source>
</evidence>
<evidence type="ECO:0000269" key="6">
    <source>
    </source>
</evidence>
<evidence type="ECO:0000269" key="7">
    <source>
    </source>
</evidence>
<evidence type="ECO:0000269" key="8">
    <source>
    </source>
</evidence>
<evidence type="ECO:0000269" key="9">
    <source>
    </source>
</evidence>
<evidence type="ECO:0000303" key="10">
    <source>
    </source>
</evidence>
<evidence type="ECO:0000305" key="11"/>
<name>HXK3_ARATH</name>
<keyword id="KW-0067">ATP-binding</keyword>
<keyword id="KW-0324">Glycolysis</keyword>
<keyword id="KW-0418">Kinase</keyword>
<keyword id="KW-0472">Membrane</keyword>
<keyword id="KW-0496">Mitochondrion</keyword>
<keyword id="KW-1000">Mitochondrion outer membrane</keyword>
<keyword id="KW-0547">Nucleotide-binding</keyword>
<keyword id="KW-1185">Reference proteome</keyword>
<keyword id="KW-0808">Transferase</keyword>
<keyword id="KW-0812">Transmembrane</keyword>
<keyword id="KW-1133">Transmembrane helix</keyword>
<feature type="chain" id="PRO_0000259631" description="Hexokinase-3">
    <location>
        <begin position="1"/>
        <end position="498"/>
    </location>
</feature>
<feature type="transmembrane region" description="Helical" evidence="4">
    <location>
        <begin position="4"/>
        <end position="24"/>
    </location>
</feature>
<feature type="domain" description="Hexokinase" evidence="5">
    <location>
        <begin position="35"/>
        <end position="494"/>
    </location>
</feature>
<feature type="region of interest" description="Hexokinase small subdomain" evidence="5">
    <location>
        <begin position="90"/>
        <end position="227"/>
    </location>
</feature>
<feature type="region of interest" description="Hexokinase large subdomain" evidence="5">
    <location>
        <begin position="228"/>
        <end position="483"/>
    </location>
</feature>
<feature type="binding site" evidence="3">
    <location>
        <position position="104"/>
    </location>
    <ligand>
        <name>ADP</name>
        <dbReference type="ChEBI" id="CHEBI:456216"/>
    </ligand>
</feature>
<feature type="binding site" evidence="3">
    <location>
        <position position="105"/>
    </location>
    <ligand>
        <name>ADP</name>
        <dbReference type="ChEBI" id="CHEBI:456216"/>
    </ligand>
</feature>
<feature type="binding site" evidence="3">
    <location>
        <position position="193"/>
    </location>
    <ligand>
        <name>D-glucose</name>
        <dbReference type="ChEBI" id="CHEBI:4167"/>
    </ligand>
</feature>
<feature type="binding site" evidence="3">
    <location>
        <position position="194"/>
    </location>
    <ligand>
        <name>D-glucose</name>
        <dbReference type="ChEBI" id="CHEBI:4167"/>
    </ligand>
</feature>
<feature type="binding site" evidence="3">
    <location>
        <position position="228"/>
    </location>
    <ligand>
        <name>D-glucose</name>
        <dbReference type="ChEBI" id="CHEBI:4167"/>
    </ligand>
</feature>
<feature type="binding site" evidence="3">
    <location>
        <position position="229"/>
    </location>
    <ligand>
        <name>D-glucose</name>
        <dbReference type="ChEBI" id="CHEBI:4167"/>
    </ligand>
</feature>
<feature type="binding site" evidence="3">
    <location>
        <position position="252"/>
    </location>
    <ligand>
        <name>ADP</name>
        <dbReference type="ChEBI" id="CHEBI:456216"/>
    </ligand>
</feature>
<feature type="binding site" evidence="3">
    <location>
        <position position="255"/>
    </location>
    <ligand>
        <name>D-glucose</name>
        <dbReference type="ChEBI" id="CHEBI:4167"/>
    </ligand>
</feature>
<feature type="binding site" evidence="3">
    <location>
        <position position="283"/>
    </location>
    <ligand>
        <name>D-glucose</name>
        <dbReference type="ChEBI" id="CHEBI:4167"/>
    </ligand>
</feature>
<feature type="binding site" evidence="3">
    <location>
        <position position="314"/>
    </location>
    <ligand>
        <name>D-glucose</name>
        <dbReference type="ChEBI" id="CHEBI:4167"/>
    </ligand>
</feature>
<feature type="binding site" evidence="3">
    <location>
        <position position="448"/>
    </location>
    <ligand>
        <name>ADP</name>
        <dbReference type="ChEBI" id="CHEBI:456216"/>
    </ligand>
</feature>
<gene>
    <name evidence="11" type="primary">HXK3</name>
    <name evidence="10" type="synonym">HKL1</name>
    <name type="ordered locus">At1g50460</name>
    <name type="ORF">F11F12.18</name>
</gene>
<comment type="function">
    <text evidence="2 8 9">Fructose and glucose phosphorylating enzyme (By similarity). May be involved in the phosphorylation of glucose during the export from mitochondrion to cytosol (By similarity). Plays a role in plant growth and development, perhaps by mediating cross-talk between glucose and hormone response pathways (PubMed:19706780). Involved in root hair cell development by mediating certain aspects of cross talk between glucose and ethylene response pathways (PubMed:22366209).</text>
</comment>
<comment type="catalytic activity">
    <reaction evidence="1">
        <text>a D-hexose + ATP = a D-hexose 6-phosphate + ADP + H(+)</text>
        <dbReference type="Rhea" id="RHEA:22740"/>
        <dbReference type="ChEBI" id="CHEBI:4194"/>
        <dbReference type="ChEBI" id="CHEBI:15378"/>
        <dbReference type="ChEBI" id="CHEBI:30616"/>
        <dbReference type="ChEBI" id="CHEBI:229467"/>
        <dbReference type="ChEBI" id="CHEBI:456216"/>
        <dbReference type="EC" id="2.7.1.1"/>
    </reaction>
</comment>
<comment type="catalytic activity">
    <reaction evidence="1">
        <text>D-fructose + ATP = D-fructose 6-phosphate + ADP + H(+)</text>
        <dbReference type="Rhea" id="RHEA:16125"/>
        <dbReference type="ChEBI" id="CHEBI:15378"/>
        <dbReference type="ChEBI" id="CHEBI:30616"/>
        <dbReference type="ChEBI" id="CHEBI:37721"/>
        <dbReference type="ChEBI" id="CHEBI:61527"/>
        <dbReference type="ChEBI" id="CHEBI:456216"/>
        <dbReference type="EC" id="2.7.1.1"/>
    </reaction>
</comment>
<comment type="catalytic activity">
    <reaction evidence="1">
        <text>D-glucose + ATP = D-glucose 6-phosphate + ADP + H(+)</text>
        <dbReference type="Rhea" id="RHEA:17825"/>
        <dbReference type="ChEBI" id="CHEBI:4167"/>
        <dbReference type="ChEBI" id="CHEBI:15378"/>
        <dbReference type="ChEBI" id="CHEBI:30616"/>
        <dbReference type="ChEBI" id="CHEBI:61548"/>
        <dbReference type="ChEBI" id="CHEBI:456216"/>
        <dbReference type="EC" id="2.7.1.1"/>
    </reaction>
</comment>
<comment type="pathway">
    <text evidence="1">Carbohydrate metabolism; hexose metabolism.</text>
</comment>
<comment type="pathway">
    <text evidence="1">Carbohydrate degradation; glycolysis; D-glyceraldehyde 3-phosphate and glycerone phosphate from D-glucose: step 1/4.</text>
</comment>
<comment type="subcellular location">
    <subcellularLocation>
        <location evidence="6 7">Mitochondrion outer membrane</location>
        <topology evidence="6 7">Single-pass membrane protein</topology>
    </subcellularLocation>
</comment>
<comment type="tissue specificity">
    <text evidence="8">Expressed in roots, emerging lateral roots, vascular tissues of cotyledons, roots and leaves, root and shoot meristems, anther filaments and funiculi of mature seeds.</text>
</comment>
<comment type="induction">
    <text evidence="8">Induced by treatment with 1-aminocyclopropanecarboxylate (ACC) and zeatin (PubMed:19706780). Repressed by treatment with abscisic acid (ABA) (PubMed:19706780).</text>
</comment>
<comment type="disruption phenotype">
    <text evidence="8">Dwarf plants with reduced roots and leaves growth (PubMed:19706780). Reduced sensitivity of seedlings to glucose repression of development (PubMed:19706780).</text>
</comment>
<comment type="similarity">
    <text evidence="5 11">Belongs to the hexokinase family.</text>
</comment>
<organism>
    <name type="scientific">Arabidopsis thaliana</name>
    <name type="common">Mouse-ear cress</name>
    <dbReference type="NCBI Taxonomy" id="3702"/>
    <lineage>
        <taxon>Eukaryota</taxon>
        <taxon>Viridiplantae</taxon>
        <taxon>Streptophyta</taxon>
        <taxon>Embryophyta</taxon>
        <taxon>Tracheophyta</taxon>
        <taxon>Spermatophyta</taxon>
        <taxon>Magnoliopsida</taxon>
        <taxon>eudicotyledons</taxon>
        <taxon>Gunneridae</taxon>
        <taxon>Pentapetalae</taxon>
        <taxon>rosids</taxon>
        <taxon>malvids</taxon>
        <taxon>Brassicales</taxon>
        <taxon>Brassicaceae</taxon>
        <taxon>Camelineae</taxon>
        <taxon>Arabidopsis</taxon>
    </lineage>
</organism>
<accession>Q9LPS1</accession>
<reference key="1">
    <citation type="journal article" date="2000" name="Nature">
        <title>Sequence and analysis of chromosome 1 of the plant Arabidopsis thaliana.</title>
        <authorList>
            <person name="Theologis A."/>
            <person name="Ecker J.R."/>
            <person name="Palm C.J."/>
            <person name="Federspiel N.A."/>
            <person name="Kaul S."/>
            <person name="White O."/>
            <person name="Alonso J."/>
            <person name="Altafi H."/>
            <person name="Araujo R."/>
            <person name="Bowman C.L."/>
            <person name="Brooks S.Y."/>
            <person name="Buehler E."/>
            <person name="Chan A."/>
            <person name="Chao Q."/>
            <person name="Chen H."/>
            <person name="Cheuk R.F."/>
            <person name="Chin C.W."/>
            <person name="Chung M.K."/>
            <person name="Conn L."/>
            <person name="Conway A.B."/>
            <person name="Conway A.R."/>
            <person name="Creasy T.H."/>
            <person name="Dewar K."/>
            <person name="Dunn P."/>
            <person name="Etgu P."/>
            <person name="Feldblyum T.V."/>
            <person name="Feng J.-D."/>
            <person name="Fong B."/>
            <person name="Fujii C.Y."/>
            <person name="Gill J.E."/>
            <person name="Goldsmith A.D."/>
            <person name="Haas B."/>
            <person name="Hansen N.F."/>
            <person name="Hughes B."/>
            <person name="Huizar L."/>
            <person name="Hunter J.L."/>
            <person name="Jenkins J."/>
            <person name="Johnson-Hopson C."/>
            <person name="Khan S."/>
            <person name="Khaykin E."/>
            <person name="Kim C.J."/>
            <person name="Koo H.L."/>
            <person name="Kremenetskaia I."/>
            <person name="Kurtz D.B."/>
            <person name="Kwan A."/>
            <person name="Lam B."/>
            <person name="Langin-Hooper S."/>
            <person name="Lee A."/>
            <person name="Lee J.M."/>
            <person name="Lenz C.A."/>
            <person name="Li J.H."/>
            <person name="Li Y.-P."/>
            <person name="Lin X."/>
            <person name="Liu S.X."/>
            <person name="Liu Z.A."/>
            <person name="Luros J.S."/>
            <person name="Maiti R."/>
            <person name="Marziali A."/>
            <person name="Militscher J."/>
            <person name="Miranda M."/>
            <person name="Nguyen M."/>
            <person name="Nierman W.C."/>
            <person name="Osborne B.I."/>
            <person name="Pai G."/>
            <person name="Peterson J."/>
            <person name="Pham P.K."/>
            <person name="Rizzo M."/>
            <person name="Rooney T."/>
            <person name="Rowley D."/>
            <person name="Sakano H."/>
            <person name="Salzberg S.L."/>
            <person name="Schwartz J.R."/>
            <person name="Shinn P."/>
            <person name="Southwick A.M."/>
            <person name="Sun H."/>
            <person name="Tallon L.J."/>
            <person name="Tambunga G."/>
            <person name="Toriumi M.J."/>
            <person name="Town C.D."/>
            <person name="Utterback T."/>
            <person name="Van Aken S."/>
            <person name="Vaysberg M."/>
            <person name="Vysotskaia V.S."/>
            <person name="Walker M."/>
            <person name="Wu D."/>
            <person name="Yu G."/>
            <person name="Fraser C.M."/>
            <person name="Venter J.C."/>
            <person name="Davis R.W."/>
        </authorList>
    </citation>
    <scope>NUCLEOTIDE SEQUENCE [LARGE SCALE GENOMIC DNA]</scope>
    <source>
        <strain>cv. Columbia</strain>
    </source>
</reference>
<reference key="2">
    <citation type="journal article" date="2017" name="Plant J.">
        <title>Araport11: a complete reannotation of the Arabidopsis thaliana reference genome.</title>
        <authorList>
            <person name="Cheng C.Y."/>
            <person name="Krishnakumar V."/>
            <person name="Chan A.P."/>
            <person name="Thibaud-Nissen F."/>
            <person name="Schobel S."/>
            <person name="Town C.D."/>
        </authorList>
    </citation>
    <scope>GENOME REANNOTATION</scope>
    <source>
        <strain>cv. Columbia</strain>
    </source>
</reference>
<reference key="3">
    <citation type="journal article" date="2003" name="Science">
        <title>Empirical analysis of transcriptional activity in the Arabidopsis genome.</title>
        <authorList>
            <person name="Yamada K."/>
            <person name="Lim J."/>
            <person name="Dale J.M."/>
            <person name="Chen H."/>
            <person name="Shinn P."/>
            <person name="Palm C.J."/>
            <person name="Southwick A.M."/>
            <person name="Wu H.C."/>
            <person name="Kim C.J."/>
            <person name="Nguyen M."/>
            <person name="Pham P.K."/>
            <person name="Cheuk R.F."/>
            <person name="Karlin-Newmann G."/>
            <person name="Liu S.X."/>
            <person name="Lam B."/>
            <person name="Sakano H."/>
            <person name="Wu T."/>
            <person name="Yu G."/>
            <person name="Miranda M."/>
            <person name="Quach H.L."/>
            <person name="Tripp M."/>
            <person name="Chang C.H."/>
            <person name="Lee J.M."/>
            <person name="Toriumi M.J."/>
            <person name="Chan M.M."/>
            <person name="Tang C.C."/>
            <person name="Onodera C.S."/>
            <person name="Deng J.M."/>
            <person name="Akiyama K."/>
            <person name="Ansari Y."/>
            <person name="Arakawa T."/>
            <person name="Banh J."/>
            <person name="Banno F."/>
            <person name="Bowser L."/>
            <person name="Brooks S.Y."/>
            <person name="Carninci P."/>
            <person name="Chao Q."/>
            <person name="Choy N."/>
            <person name="Enju A."/>
            <person name="Goldsmith A.D."/>
            <person name="Gurjal M."/>
            <person name="Hansen N.F."/>
            <person name="Hayashizaki Y."/>
            <person name="Johnson-Hopson C."/>
            <person name="Hsuan V.W."/>
            <person name="Iida K."/>
            <person name="Karnes M."/>
            <person name="Khan S."/>
            <person name="Koesema E."/>
            <person name="Ishida J."/>
            <person name="Jiang P.X."/>
            <person name="Jones T."/>
            <person name="Kawai J."/>
            <person name="Kamiya A."/>
            <person name="Meyers C."/>
            <person name="Nakajima M."/>
            <person name="Narusaka M."/>
            <person name="Seki M."/>
            <person name="Sakurai T."/>
            <person name="Satou M."/>
            <person name="Tamse R."/>
            <person name="Vaysberg M."/>
            <person name="Wallender E.K."/>
            <person name="Wong C."/>
            <person name="Yamamura Y."/>
            <person name="Yuan S."/>
            <person name="Shinozaki K."/>
            <person name="Davis R.W."/>
            <person name="Theologis A."/>
            <person name="Ecker J.R."/>
        </authorList>
    </citation>
    <scope>NUCLEOTIDE SEQUENCE [LARGE SCALE MRNA]</scope>
    <source>
        <strain>cv. Columbia</strain>
    </source>
</reference>
<reference key="4">
    <citation type="journal article" date="2003" name="Plant Cell">
        <title>Enzymes of glycolysis are functionally associated with the mitochondrion in Arabidopsis cells.</title>
        <authorList>
            <person name="Giege P."/>
            <person name="Heazlewood J.L."/>
            <person name="Roessner-Tunali U."/>
            <person name="Millar A.H."/>
            <person name="Fernie A.R."/>
            <person name="Leaver C.J."/>
            <person name="Sweetlove L.J."/>
        </authorList>
    </citation>
    <scope>IDENTIFICATION BY MASS SPECTROMETRY</scope>
    <scope>SUBCELLULAR LOCATION [LARGE SCALE ANALYSIS]</scope>
</reference>
<reference key="5">
    <citation type="journal article" date="2004" name="Plant Cell">
        <title>Experimental analysis of the Arabidopsis mitochondrial proteome highlights signaling and regulatory components, provides assessment of targeting prediction programs, and indicates plant-specific mitochondrial proteins.</title>
        <authorList>
            <person name="Heazlewood J.L."/>
            <person name="Tonti-Filippini J.S."/>
            <person name="Gout A.M."/>
            <person name="Day D.A."/>
            <person name="Whelan J."/>
            <person name="Millar A.H."/>
        </authorList>
    </citation>
    <scope>IDENTIFICATION BY MASS SPECTROMETRY</scope>
    <scope>SUBCELLULAR LOCATION [LARGE SCALE ANALYSIS]</scope>
    <source>
        <strain>cv. Landsberg erecta</strain>
    </source>
</reference>
<reference key="6">
    <citation type="journal article" date="2009" name="J. Exp. Bot.">
        <title>Function of Arabidopsis hexokinase-like1 as a negative regulator of plant growth.</title>
        <authorList>
            <person name="Karve A."/>
            <person name="Moore B.D."/>
        </authorList>
    </citation>
    <scope>FUNCTION</scope>
    <scope>TISSUE SPECIFICITY</scope>
    <scope>INDUCTION</scope>
    <scope>DISRUPTION PHENOTYPE</scope>
</reference>
<reference key="7">
    <citation type="journal article" date="2012" name="Plant Physiol.">
        <title>Arabidopsis Hexokinase-Like1 and Hexokinase1 form a critical node in mediating plant glucose and ethylene responses.</title>
        <authorList>
            <person name="Karve A."/>
            <person name="Xia X."/>
            <person name="Moore B.D."/>
        </authorList>
    </citation>
    <scope>FUNCTION</scope>
</reference>
<sequence length="498" mass="54591">MGKVAVAFAAVAVVAACSVAAVMVGRRMKSRRKWRTVVEILKELEDDCDTPVGRLRQVVDAMAVEMHAGLASEGGSKLKMLLTFVDDLPTGREKGTYYALHLGGTYFRILRVLLGDQRSYLDVQDVERHPIPSHLMNSTSEVLFNFLAFSLERFIEKEENGSDSQGVRRELAFTFSFPVKHTSISSGVLIKWTKGFEISEMVGQDIAECLQGALNRRGLDMHVAALVNDTVGALSLGYYHDPDTVVAVVFGTGSNACYLERTDAIIKCQGLLTTSGSMVVNMEWGNFWSSHLPRTSYDIDLDAESSNANDMGFEKMISGMYLGDIVRRVILRMSEDSDIFGPISPVLSEPYVLRTNSVSAIHEDDTPELQEVARILKDIGVSDVPLKVRKLVVKICDVVTRRAGRLAAAGIAGILKKIGRDGSGGITSGRSRSEIQMQKRTVVAVEGGLYMNYTMFREYMEEALVEILGEEVSQYVVVKAMEDGSSIGSALLVASLQS</sequence>
<proteinExistence type="evidence at protein level"/>